<comment type="function">
    <text evidence="5 6 8 11 12 13 14">ATP-dependent 3'-5' DNA helicase able to unwind duplex DNA or DNA:RNA heteroduplex (PubMed:8878475, PubMed:9545297). Unwinds G-quadruplex DNA; unwinding occurs in the 3'-5' direction, requires a 3' single-stranded end of at least 7 nucleotides (PubMed:10198430). Helicase activity is higher on G-quadruplex substrates than on duplex DNA substrates (PubMed:10198430). Assayed with a catalytic fragment (residues 400-1268) (PubMed:10198430). Telomeres and rDNA are notably G-rich; formation of G-quadruplex DNA would block DNA replication and transcription (PubMed:10198430). Acts as an integral component of the S-phase checkpoint response, which arrests cells due to DNA damage or blocked fork progression during DNA replication (PubMed:10640278). Can create a deleterious topological substrate that TOP3 preferentially resolves. The TOP3-SGS1 protein complex may function as a eukaryotic reverse gyrase introducing positive supercoils into extrachromosomal ribosomal DNA rings (PubMed:7969174). Together with topoisomerase II has a role in chromosomal segregation (PubMed:7736577). Maintains rDNA structure where it has a role in re-starting stalled replication forks (PubMed:12228808).</text>
</comment>
<comment type="catalytic activity">
    <reaction evidence="5 13 14">
        <text>Couples ATP hydrolysis with the unwinding of duplex DNA by translocating in the 3'-5' direction.</text>
        <dbReference type="EC" id="5.6.2.4"/>
    </reaction>
</comment>
<comment type="catalytic activity">
    <reaction evidence="5 14">
        <text>ATP + H2O = ADP + phosphate + H(+)</text>
        <dbReference type="Rhea" id="RHEA:13065"/>
        <dbReference type="ChEBI" id="CHEBI:15377"/>
        <dbReference type="ChEBI" id="CHEBI:15378"/>
        <dbReference type="ChEBI" id="CHEBI:30616"/>
        <dbReference type="ChEBI" id="CHEBI:43474"/>
        <dbReference type="ChEBI" id="CHEBI:456216"/>
        <dbReference type="EC" id="5.6.2.4"/>
    </reaction>
</comment>
<comment type="cofactor">
    <cofactor evidence="5">
        <name>Mg(2+)</name>
        <dbReference type="ChEBI" id="CHEBI:18420"/>
    </cofactor>
    <text evidence="5">DNA helicase activity on G-quadruplex substrates requires Mg(2+).</text>
</comment>
<comment type="activity regulation">
    <text evidence="5">Helicase activity on G-quadruplex DNA is inhibited by ATP-gamma-S (PubMed:10198430).</text>
</comment>
<comment type="subunit">
    <text evidence="7 9 10 11 12">Heterodimer with TOP3 (PubMed:15899853, PubMed:7969174). Forms a complex with TOP3 and RMI1 (PubMed:15889139). Forms a ternary complex with a MLH1-MLH3 heterodimer (MutLbeta) during meiosis (PubMed:12200140). Interacts with TOP2 (PubMed:7736577).</text>
</comment>
<comment type="interaction">
    <interactant intactId="EBI-17059">
        <id>P35187</id>
    </interactant>
    <interactant intactId="EBI-17843">
        <id>P22216</id>
        <label>RAD53</label>
    </interactant>
    <organismsDiffer>false</organismsDiffer>
    <experiments>3</experiments>
</comment>
<comment type="interaction">
    <interactant intactId="EBI-17059">
        <id>P35187</id>
    </interactant>
    <interactant intactId="EBI-14971">
        <id>P22336</id>
        <label>RFA1</label>
    </interactant>
    <organismsDiffer>false</organismsDiffer>
    <experiments>5</experiments>
</comment>
<comment type="interaction">
    <interactant intactId="EBI-17059">
        <id>P35187</id>
    </interactant>
    <interactant intactId="EBI-38690">
        <id>Q02685</id>
        <label>RMI1</label>
    </interactant>
    <organismsDiffer>false</organismsDiffer>
    <experiments>8</experiments>
</comment>
<comment type="interaction">
    <interactant intactId="EBI-17059">
        <id>P35187</id>
    </interactant>
    <interactant intactId="EBI-17490">
        <id>Q12306</id>
        <label>SMT3</label>
    </interactant>
    <organismsDiffer>false</organismsDiffer>
    <experiments>3</experiments>
</comment>
<comment type="interaction">
    <interactant intactId="EBI-17059">
        <id>P35187</id>
    </interactant>
    <interactant intactId="EBI-19365">
        <id>P13099</id>
        <label>TOP3</label>
    </interactant>
    <organismsDiffer>false</organismsDiffer>
    <experiments>6</experiments>
</comment>
<comment type="subcellular location">
    <subcellularLocation>
        <location evidence="6">Nucleus</location>
        <location evidence="6">Nucleolus</location>
    </subcellularLocation>
    <text evidence="6">Localizes to S-phase-specific nuclear foci (PubMed:10640278).</text>
</comment>
<comment type="induction">
    <text evidence="6">Expression is regulated through the cell cycle with an accumulation in S phase.</text>
</comment>
<comment type="similarity">
    <text evidence="17">Belongs to the helicase family. RecQ subfamily.</text>
</comment>
<accession>P35187</accession>
<accession>D6W014</accession>
<protein>
    <recommendedName>
        <fullName evidence="15">ATP-dependent helicase SGS1</fullName>
        <ecNumber evidence="5 13 14">5.6.2.4</ecNumber>
    </recommendedName>
    <alternativeName>
        <fullName evidence="17">DNA 3'-5' helicase Sgs1</fullName>
    </alternativeName>
    <alternativeName>
        <fullName>Helicase TPS1</fullName>
    </alternativeName>
</protein>
<gene>
    <name evidence="15" type="primary">SGS1</name>
    <name evidence="16" type="synonym">TPS1</name>
    <name evidence="21" type="ordered locus">YMR190C</name>
    <name type="ORF">YM9646.02C</name>
</gene>
<feature type="chain" id="PRO_0000205057" description="ATP-dependent helicase SGS1">
    <location>
        <begin position="1"/>
        <end position="1447"/>
    </location>
</feature>
<feature type="domain" description="Helicase ATP-binding" evidence="2">
    <location>
        <begin position="687"/>
        <end position="864"/>
    </location>
</feature>
<feature type="domain" description="Helicase C-terminal" evidence="3">
    <location>
        <begin position="886"/>
        <end position="1035"/>
    </location>
</feature>
<feature type="domain" description="HRDC" evidence="1">
    <location>
        <begin position="1272"/>
        <end position="1351"/>
    </location>
</feature>
<feature type="region of interest" description="Disordered" evidence="4">
    <location>
        <begin position="37"/>
        <end position="78"/>
    </location>
</feature>
<feature type="region of interest" description="Disordered" evidence="4">
    <location>
        <begin position="243"/>
        <end position="264"/>
    </location>
</feature>
<feature type="region of interest" description="Disordered" evidence="4">
    <location>
        <begin position="342"/>
        <end position="430"/>
    </location>
</feature>
<feature type="region of interest" description="Disordered" evidence="4">
    <location>
        <begin position="552"/>
        <end position="572"/>
    </location>
</feature>
<feature type="region of interest" description="Disordered" evidence="4">
    <location>
        <begin position="601"/>
        <end position="639"/>
    </location>
</feature>
<feature type="region of interest" description="Disordered" evidence="4">
    <location>
        <begin position="1402"/>
        <end position="1447"/>
    </location>
</feature>
<feature type="short sequence motif" description="DEAH box">
    <location>
        <begin position="808"/>
        <end position="811"/>
    </location>
</feature>
<feature type="compositionally biased region" description="Polar residues" evidence="4">
    <location>
        <begin position="59"/>
        <end position="78"/>
    </location>
</feature>
<feature type="compositionally biased region" description="Basic and acidic residues" evidence="4">
    <location>
        <begin position="243"/>
        <end position="253"/>
    </location>
</feature>
<feature type="compositionally biased region" description="Polar residues" evidence="4">
    <location>
        <begin position="254"/>
        <end position="264"/>
    </location>
</feature>
<feature type="compositionally biased region" description="Basic and acidic residues" evidence="4">
    <location>
        <begin position="363"/>
        <end position="386"/>
    </location>
</feature>
<feature type="compositionally biased region" description="Acidic residues" evidence="4">
    <location>
        <begin position="403"/>
        <end position="415"/>
    </location>
</feature>
<feature type="compositionally biased region" description="Acidic residues" evidence="4">
    <location>
        <begin position="552"/>
        <end position="561"/>
    </location>
</feature>
<feature type="compositionally biased region" description="Basic and acidic residues" evidence="4">
    <location>
        <begin position="601"/>
        <end position="611"/>
    </location>
</feature>
<feature type="compositionally biased region" description="Polar residues" evidence="4">
    <location>
        <begin position="1402"/>
        <end position="1411"/>
    </location>
</feature>
<feature type="compositionally biased region" description="Low complexity" evidence="4">
    <location>
        <begin position="1412"/>
        <end position="1424"/>
    </location>
</feature>
<feature type="compositionally biased region" description="Basic residues" evidence="4">
    <location>
        <begin position="1425"/>
        <end position="1447"/>
    </location>
</feature>
<feature type="binding site" evidence="2">
    <location>
        <begin position="714"/>
        <end position="721"/>
    </location>
    <ligand>
        <name>ATP</name>
        <dbReference type="ChEBI" id="CHEBI:30616"/>
    </ligand>
</feature>
<feature type="mutagenesis site" description="In allele sgs1-34; temperature-sensitive." evidence="8">
    <original>Q</original>
    <variation>P</variation>
    <location>
        <position position="31"/>
    </location>
</feature>
<feature type="mutagenesis site" description="Loss of helicase activity." evidence="13">
    <original>K</original>
    <variation>A</variation>
    <location>
        <position position="706"/>
    </location>
</feature>
<feature type="mutagenesis site" description="In allele sgs1-35; temperature-sensitive." evidence="8">
    <original>T</original>
    <variation>I</variation>
    <location>
        <position position="980"/>
    </location>
</feature>
<feature type="mutagenesis site" description="In allele sgs1-36; temperature-sensitive." evidence="8">
    <original>E</original>
    <variation>K</variation>
    <location>
        <position position="987"/>
    </location>
</feature>
<feature type="helix" evidence="22">
    <location>
        <begin position="1274"/>
        <end position="1291"/>
    </location>
</feature>
<feature type="strand" evidence="22">
    <location>
        <begin position="1292"/>
        <end position="1295"/>
    </location>
</feature>
<feature type="helix" evidence="22">
    <location>
        <begin position="1303"/>
        <end position="1312"/>
    </location>
</feature>
<feature type="helix" evidence="22">
    <location>
        <begin position="1317"/>
        <end position="1320"/>
    </location>
</feature>
<feature type="helix" evidence="22">
    <location>
        <begin position="1321"/>
        <end position="1323"/>
    </location>
</feature>
<feature type="helix" evidence="22">
    <location>
        <begin position="1328"/>
        <end position="1333"/>
    </location>
</feature>
<feature type="helix" evidence="22">
    <location>
        <begin position="1334"/>
        <end position="1336"/>
    </location>
</feature>
<feature type="helix" evidence="22">
    <location>
        <begin position="1338"/>
        <end position="1347"/>
    </location>
</feature>
<feature type="turn" evidence="22">
    <location>
        <begin position="1348"/>
        <end position="1350"/>
    </location>
</feature>
<sequence>MVTKPSHNLRREHKWLKETATLQEDKDFVFQAIQKHIANKRPKTNSPPTTPSKDECGPGTTNFITSIPASGPTNTATKQHEVMQTLSNDTEWLSYTATSNQYADVPMVDIPASTSVVSNPRTPNGSKTHNFNTFRPHMASSLVENDSSRNLGSRNNNKSVIDNSSIGKQLENDIKLEVIRLQGSLIMALKEQSKLLLQKCSIIESTSLSEDAKRLQLSRDIRPQLSNMSIRIDSLEKEIIKAKKDGMSKDQSKGRSQVSSQDDNIISSILPSPLEYNTSSRNSNLTSTTATTVTKALAITGAKQNITNNTGKNSNNDSNNDDLIQVLDDEDDIDCDPPVILKEGAPHSPAFPHLHMTSEEQDELTRRRNMRSREPVNYRIPDRDDPFDYVMGKSLRDDYPDVEREEDELTMEAEDDAHSSYMTTRDEEKEENELLNQSDFDFVVNDDLDPTQDTDYHDNMDVSANIQESSQEGDTRSTITLSQNKNVQVILSSPTAQSVPSNGQNQIGVEHIDLLEDDLEKDAILDDSMSFSFGRQHMPMSHSDLELIDSEKENEDFEEDNNNNGIEYLSDSDLERFDEERENRTQVADIQELDNDLKIITERKLTGDNEHPPPSWSPKIKREKSSVSQKDEEDDFDDDFSLSDIVSKSNLSSKTNGPTYPWSDEVLYRLHEVFKLPGFRPNQLEAVNATLQGKDVFVLMPTGGGKSLCYQLPAVVKSGKTHGTTIVISPLISLMQDQVEHLLNKNIKASMFSSRGTAEQRRQTFNLFINGLLDLVYISPEMISASEQCKRAISRLYADGKLARIVVDEAHCVSNWGHDFRPDYKELKFFKREYPDIPMIALTATASEQVRMDIIHNLELKEPVFLKQSFNRTNLYYEVNKKTKNTIFEICDAVKSRFKNQTGIIYCHSKKSCEQTSAQMQRNGIKCAYYHAGMEPDERLSVQKAWQADEIQVICATVAFGMGIDKPDVRFVYHFTVPRTLEGYYQETGRAGRDGNYSYCITYFSFRDIRTMQTMIQKDKNLDRENKEKHLNKLQQVMAYCDNVTDCRRKLVLSYFNEDFDSKLCHKNCDNCRNSANVINEERDVTEPAKKIVKLVESIQNERVTIIYCQDVFKGSRSSKIVQANHDTLEEHGIGKSMQKSEIERIFFHLITIRVLQEYSIMNNSGFASSYVKVGPNAKKLLTGKMEIKMQFTISAPNSRPSTSSSFQANEDNIPVIAQKSTTIGGNVAANPPRFISAKEHLRSYTYGGSTMGSSHPITLKNTSDLRSTQELNNLRMTYERLRELSLNLGNRMVPPVGNFMPDSILKKMAAILPMNDSAFATLGTVEDKYRRRFKYFKATIADLSKKRSSEDHEKYDTILNDEFVNRAAASSNGIAQSTGTKSKFFGANLNEAKENEQIINQIRQSQLPKNTTSSKSGTRSISKSSKKSANGRRGFRNYRGHYRGRK</sequence>
<proteinExistence type="evidence at protein level"/>
<dbReference type="EC" id="5.6.2.4" evidence="5 13 14"/>
<dbReference type="EMBL" id="U22341">
    <property type="protein sequence ID" value="AAB60289.1"/>
    <property type="molecule type" value="Genomic_DNA"/>
</dbReference>
<dbReference type="EMBL" id="L07870">
    <property type="protein sequence ID" value="AAA35167.1"/>
    <property type="molecule type" value="Genomic_DNA"/>
</dbReference>
<dbReference type="EMBL" id="Z47815">
    <property type="protein sequence ID" value="CAA87811.1"/>
    <property type="molecule type" value="Genomic_DNA"/>
</dbReference>
<dbReference type="EMBL" id="BK006946">
    <property type="protein sequence ID" value="DAA10088.1"/>
    <property type="molecule type" value="Genomic_DNA"/>
</dbReference>
<dbReference type="PIR" id="S50918">
    <property type="entry name" value="S50918"/>
</dbReference>
<dbReference type="RefSeq" id="NP_013915.1">
    <property type="nucleotide sequence ID" value="NM_001182696.1"/>
</dbReference>
<dbReference type="PDB" id="1D8B">
    <property type="method" value="NMR"/>
    <property type="chains" value="A=1271-1351"/>
</dbReference>
<dbReference type="PDBsum" id="1D8B"/>
<dbReference type="BMRB" id="P35187"/>
<dbReference type="SMR" id="P35187"/>
<dbReference type="BioGRID" id="35368">
    <property type="interactions" value="2356"/>
</dbReference>
<dbReference type="ComplexPortal" id="CPX-1071">
    <property type="entry name" value="RecQ helicase-Topo III complex"/>
</dbReference>
<dbReference type="DIP" id="DIP-2911N"/>
<dbReference type="FunCoup" id="P35187">
    <property type="interactions" value="576"/>
</dbReference>
<dbReference type="IntAct" id="P35187">
    <property type="interactions" value="16"/>
</dbReference>
<dbReference type="MINT" id="P35187"/>
<dbReference type="STRING" id="4932.YMR190C"/>
<dbReference type="GlyGen" id="P35187">
    <property type="glycosylation" value="1 site"/>
</dbReference>
<dbReference type="iPTMnet" id="P35187"/>
<dbReference type="PaxDb" id="4932-YMR190C"/>
<dbReference type="PeptideAtlas" id="P35187"/>
<dbReference type="EnsemblFungi" id="YMR190C_mRNA">
    <property type="protein sequence ID" value="YMR190C"/>
    <property type="gene ID" value="YMR190C"/>
</dbReference>
<dbReference type="GeneID" id="855228"/>
<dbReference type="KEGG" id="sce:YMR190C"/>
<dbReference type="AGR" id="SGD:S000004802"/>
<dbReference type="SGD" id="S000004802">
    <property type="gene designation" value="SGS1"/>
</dbReference>
<dbReference type="VEuPathDB" id="FungiDB:YMR190C"/>
<dbReference type="eggNOG" id="KOG0351">
    <property type="taxonomic scope" value="Eukaryota"/>
</dbReference>
<dbReference type="GeneTree" id="ENSGT00940000156800"/>
<dbReference type="HOGENOM" id="CLU_001103_22_1_1"/>
<dbReference type="InParanoid" id="P35187"/>
<dbReference type="OMA" id="LCHKNCD"/>
<dbReference type="OrthoDB" id="10261556at2759"/>
<dbReference type="BioCyc" id="YEAST:G3O-32877-MONOMER"/>
<dbReference type="BRENDA" id="3.6.4.12">
    <property type="organism ID" value="984"/>
</dbReference>
<dbReference type="BioGRID-ORCS" id="855228">
    <property type="hits" value="0 hits in 10 CRISPR screens"/>
</dbReference>
<dbReference type="EvolutionaryTrace" id="P35187"/>
<dbReference type="PRO" id="PR:P35187"/>
<dbReference type="Proteomes" id="UP000002311">
    <property type="component" value="Chromosome XIII"/>
</dbReference>
<dbReference type="RNAct" id="P35187">
    <property type="molecule type" value="protein"/>
</dbReference>
<dbReference type="GO" id="GO:0005694">
    <property type="term" value="C:chromosome"/>
    <property type="evidence" value="ECO:0000318"/>
    <property type="project" value="GO_Central"/>
</dbReference>
<dbReference type="GO" id="GO:0005737">
    <property type="term" value="C:cytoplasm"/>
    <property type="evidence" value="ECO:0000318"/>
    <property type="project" value="GO_Central"/>
</dbReference>
<dbReference type="GO" id="GO:0005730">
    <property type="term" value="C:nucleolus"/>
    <property type="evidence" value="ECO:0000314"/>
    <property type="project" value="SGD"/>
</dbReference>
<dbReference type="GO" id="GO:0005634">
    <property type="term" value="C:nucleus"/>
    <property type="evidence" value="ECO:0007005"/>
    <property type="project" value="SGD"/>
</dbReference>
<dbReference type="GO" id="GO:0031422">
    <property type="term" value="C:RecQ family helicase-topoisomerase III complex"/>
    <property type="evidence" value="ECO:0000314"/>
    <property type="project" value="SGD"/>
</dbReference>
<dbReference type="GO" id="GO:0043138">
    <property type="term" value="F:3'-5' DNA helicase activity"/>
    <property type="evidence" value="ECO:0000314"/>
    <property type="project" value="SGD"/>
</dbReference>
<dbReference type="GO" id="GO:0005524">
    <property type="term" value="F:ATP binding"/>
    <property type="evidence" value="ECO:0007669"/>
    <property type="project" value="UniProtKB-KW"/>
</dbReference>
<dbReference type="GO" id="GO:0016887">
    <property type="term" value="F:ATP hydrolysis activity"/>
    <property type="evidence" value="ECO:0007669"/>
    <property type="project" value="RHEA"/>
</dbReference>
<dbReference type="GO" id="GO:0003677">
    <property type="term" value="F:DNA binding"/>
    <property type="evidence" value="ECO:0007669"/>
    <property type="project" value="UniProtKB-KW"/>
</dbReference>
<dbReference type="GO" id="GO:0003678">
    <property type="term" value="F:DNA helicase activity"/>
    <property type="evidence" value="ECO:0000314"/>
    <property type="project" value="SGD"/>
</dbReference>
<dbReference type="GO" id="GO:0044547">
    <property type="term" value="F:DNA topoisomerase binding"/>
    <property type="evidence" value="ECO:0000315"/>
    <property type="project" value="DisProt"/>
</dbReference>
<dbReference type="GO" id="GO:0009378">
    <property type="term" value="F:four-way junction helicase activity"/>
    <property type="evidence" value="ECO:0000318"/>
    <property type="project" value="GO_Central"/>
</dbReference>
<dbReference type="GO" id="GO:0051276">
    <property type="term" value="P:chromosome organization"/>
    <property type="evidence" value="ECO:0000315"/>
    <property type="project" value="SGD"/>
</dbReference>
<dbReference type="GO" id="GO:0000729">
    <property type="term" value="P:DNA double-strand break processing"/>
    <property type="evidence" value="ECO:0000315"/>
    <property type="project" value="SGD"/>
</dbReference>
<dbReference type="GO" id="GO:0006281">
    <property type="term" value="P:DNA repair"/>
    <property type="evidence" value="ECO:0000315"/>
    <property type="project" value="DisProt"/>
</dbReference>
<dbReference type="GO" id="GO:0006260">
    <property type="term" value="P:DNA replication"/>
    <property type="evidence" value="ECO:0000314"/>
    <property type="project" value="SGD"/>
</dbReference>
<dbReference type="GO" id="GO:0006265">
    <property type="term" value="P:DNA topological change"/>
    <property type="evidence" value="ECO:0000314"/>
    <property type="project" value="SGD"/>
</dbReference>
<dbReference type="GO" id="GO:0000724">
    <property type="term" value="P:double-strand break repair via homologous recombination"/>
    <property type="evidence" value="ECO:0000314"/>
    <property type="project" value="ComplexPortal"/>
</dbReference>
<dbReference type="GO" id="GO:0007534">
    <property type="term" value="P:gene conversion at mating-type locus"/>
    <property type="evidence" value="ECO:0000316"/>
    <property type="project" value="SGD"/>
</dbReference>
<dbReference type="GO" id="GO:0045132">
    <property type="term" value="P:meiotic chromosome segregation"/>
    <property type="evidence" value="ECO:0000315"/>
    <property type="project" value="SGD"/>
</dbReference>
<dbReference type="GO" id="GO:0000706">
    <property type="term" value="P:meiotic DNA double-strand break processing"/>
    <property type="evidence" value="ECO:0000316"/>
    <property type="project" value="SGD"/>
</dbReference>
<dbReference type="GO" id="GO:0044818">
    <property type="term" value="P:mitotic G2/M transition checkpoint"/>
    <property type="evidence" value="ECO:0000316"/>
    <property type="project" value="SGD"/>
</dbReference>
<dbReference type="GO" id="GO:0031573">
    <property type="term" value="P:mitotic intra-S DNA damage checkpoint signaling"/>
    <property type="evidence" value="ECO:0000315"/>
    <property type="project" value="SGD"/>
</dbReference>
<dbReference type="GO" id="GO:0000070">
    <property type="term" value="P:mitotic sister chromatid segregation"/>
    <property type="evidence" value="ECO:0000315"/>
    <property type="project" value="SGD"/>
</dbReference>
<dbReference type="GO" id="GO:0010947">
    <property type="term" value="P:negative regulation of meiotic joint molecule formation"/>
    <property type="evidence" value="ECO:0000316"/>
    <property type="project" value="SGD"/>
</dbReference>
<dbReference type="GO" id="GO:0010520">
    <property type="term" value="P:regulation of reciprocal meiotic recombination"/>
    <property type="evidence" value="ECO:0000316"/>
    <property type="project" value="SGD"/>
</dbReference>
<dbReference type="GO" id="GO:0000723">
    <property type="term" value="P:telomere maintenance"/>
    <property type="evidence" value="ECO:0000316"/>
    <property type="project" value="SGD"/>
</dbReference>
<dbReference type="GO" id="GO:0000722">
    <property type="term" value="P:telomere maintenance via recombination"/>
    <property type="evidence" value="ECO:0000315"/>
    <property type="project" value="SGD"/>
</dbReference>
<dbReference type="GO" id="GO:0031860">
    <property type="term" value="P:telomeric 3' overhang formation"/>
    <property type="evidence" value="ECO:0000316"/>
    <property type="project" value="SGD"/>
</dbReference>
<dbReference type="CDD" id="cd17920">
    <property type="entry name" value="DEXHc_RecQ"/>
    <property type="match status" value="1"/>
</dbReference>
<dbReference type="CDD" id="cd18794">
    <property type="entry name" value="SF2_C_RecQ"/>
    <property type="match status" value="1"/>
</dbReference>
<dbReference type="FunFam" id="1.10.10.10:FF:000668">
    <property type="entry name" value="ATP-dependent DNA helicase"/>
    <property type="match status" value="1"/>
</dbReference>
<dbReference type="FunFam" id="3.40.50.300:FF:000296">
    <property type="entry name" value="ATP-dependent DNA helicase RecQ"/>
    <property type="match status" value="1"/>
</dbReference>
<dbReference type="FunFam" id="1.10.150.80:FF:000027">
    <property type="entry name" value="ATP-dependent helicase SGS1"/>
    <property type="match status" value="1"/>
</dbReference>
<dbReference type="FunFam" id="3.40.50.300:FF:000340">
    <property type="entry name" value="Bloom syndrome, RecQ helicase"/>
    <property type="match status" value="1"/>
</dbReference>
<dbReference type="Gene3D" id="1.10.150.80">
    <property type="entry name" value="HRDC domain"/>
    <property type="match status" value="1"/>
</dbReference>
<dbReference type="Gene3D" id="3.40.50.300">
    <property type="entry name" value="P-loop containing nucleotide triphosphate hydrolases"/>
    <property type="match status" value="2"/>
</dbReference>
<dbReference type="Gene3D" id="1.10.10.10">
    <property type="entry name" value="Winged helix-like DNA-binding domain superfamily/Winged helix DNA-binding domain"/>
    <property type="match status" value="1"/>
</dbReference>
<dbReference type="InterPro" id="IPR011545">
    <property type="entry name" value="DEAD/DEAH_box_helicase_dom"/>
</dbReference>
<dbReference type="InterPro" id="IPR002464">
    <property type="entry name" value="DNA/RNA_helicase_DEAH_CS"/>
</dbReference>
<dbReference type="InterPro" id="IPR004589">
    <property type="entry name" value="DNA_helicase_ATP-dep_RecQ"/>
</dbReference>
<dbReference type="InterPro" id="IPR014001">
    <property type="entry name" value="Helicase_ATP-bd"/>
</dbReference>
<dbReference type="InterPro" id="IPR001650">
    <property type="entry name" value="Helicase_C-like"/>
</dbReference>
<dbReference type="InterPro" id="IPR022758">
    <property type="entry name" value="Helicase_Sgs1"/>
</dbReference>
<dbReference type="InterPro" id="IPR010997">
    <property type="entry name" value="HRDC-like_sf"/>
</dbReference>
<dbReference type="InterPro" id="IPR002121">
    <property type="entry name" value="HRDC_dom"/>
</dbReference>
<dbReference type="InterPro" id="IPR044876">
    <property type="entry name" value="HRDC_dom_sf"/>
</dbReference>
<dbReference type="InterPro" id="IPR027417">
    <property type="entry name" value="P-loop_NTPase"/>
</dbReference>
<dbReference type="InterPro" id="IPR032284">
    <property type="entry name" value="RecQ_Zn-bd"/>
</dbReference>
<dbReference type="InterPro" id="IPR018982">
    <property type="entry name" value="RQC_domain"/>
</dbReference>
<dbReference type="InterPro" id="IPR036388">
    <property type="entry name" value="WH-like_DNA-bd_sf"/>
</dbReference>
<dbReference type="NCBIfam" id="TIGR00614">
    <property type="entry name" value="recQ_fam"/>
    <property type="match status" value="1"/>
</dbReference>
<dbReference type="PANTHER" id="PTHR13710">
    <property type="entry name" value="DNA HELICASE RECQ FAMILY MEMBER"/>
    <property type="match status" value="1"/>
</dbReference>
<dbReference type="PANTHER" id="PTHR13710:SF153">
    <property type="entry name" value="RECQ-LIKE DNA HELICASE BLM"/>
    <property type="match status" value="1"/>
</dbReference>
<dbReference type="Pfam" id="PF00270">
    <property type="entry name" value="DEAD"/>
    <property type="match status" value="1"/>
</dbReference>
<dbReference type="Pfam" id="PF00271">
    <property type="entry name" value="Helicase_C"/>
    <property type="match status" value="1"/>
</dbReference>
<dbReference type="Pfam" id="PF11408">
    <property type="entry name" value="Helicase_Sgs1"/>
    <property type="match status" value="1"/>
</dbReference>
<dbReference type="Pfam" id="PF16124">
    <property type="entry name" value="RecQ_Zn_bind"/>
    <property type="match status" value="1"/>
</dbReference>
<dbReference type="Pfam" id="PF09382">
    <property type="entry name" value="RQC"/>
    <property type="match status" value="1"/>
</dbReference>
<dbReference type="SMART" id="SM00487">
    <property type="entry name" value="DEXDc"/>
    <property type="match status" value="1"/>
</dbReference>
<dbReference type="SMART" id="SM00490">
    <property type="entry name" value="HELICc"/>
    <property type="match status" value="1"/>
</dbReference>
<dbReference type="SMART" id="SM00341">
    <property type="entry name" value="HRDC"/>
    <property type="match status" value="1"/>
</dbReference>
<dbReference type="SMART" id="SM00956">
    <property type="entry name" value="RQC"/>
    <property type="match status" value="1"/>
</dbReference>
<dbReference type="SUPFAM" id="SSF47819">
    <property type="entry name" value="HRDC-like"/>
    <property type="match status" value="1"/>
</dbReference>
<dbReference type="SUPFAM" id="SSF52540">
    <property type="entry name" value="P-loop containing nucleoside triphosphate hydrolases"/>
    <property type="match status" value="2"/>
</dbReference>
<dbReference type="PROSITE" id="PS00690">
    <property type="entry name" value="DEAH_ATP_HELICASE"/>
    <property type="match status" value="1"/>
</dbReference>
<dbReference type="PROSITE" id="PS51192">
    <property type="entry name" value="HELICASE_ATP_BIND_1"/>
    <property type="match status" value="1"/>
</dbReference>
<dbReference type="PROSITE" id="PS51194">
    <property type="entry name" value="HELICASE_CTER"/>
    <property type="match status" value="1"/>
</dbReference>
<dbReference type="PROSITE" id="PS50967">
    <property type="entry name" value="HRDC"/>
    <property type="match status" value="1"/>
</dbReference>
<keyword id="KW-0002">3D-structure</keyword>
<keyword id="KW-0067">ATP-binding</keyword>
<keyword id="KW-0238">DNA-binding</keyword>
<keyword id="KW-0347">Helicase</keyword>
<keyword id="KW-0378">Hydrolase</keyword>
<keyword id="KW-0413">Isomerase</keyword>
<keyword id="KW-0547">Nucleotide-binding</keyword>
<keyword id="KW-0539">Nucleus</keyword>
<keyword id="KW-1185">Reference proteome</keyword>
<name>SGS1_YEAST</name>
<organism>
    <name type="scientific">Saccharomyces cerevisiae (strain ATCC 204508 / S288c)</name>
    <name type="common">Baker's yeast</name>
    <dbReference type="NCBI Taxonomy" id="559292"/>
    <lineage>
        <taxon>Eukaryota</taxon>
        <taxon>Fungi</taxon>
        <taxon>Dikarya</taxon>
        <taxon>Ascomycota</taxon>
        <taxon>Saccharomycotina</taxon>
        <taxon>Saccharomycetes</taxon>
        <taxon>Saccharomycetales</taxon>
        <taxon>Saccharomycetaceae</taxon>
        <taxon>Saccharomyces</taxon>
    </lineage>
</organism>
<evidence type="ECO:0000255" key="1">
    <source>
        <dbReference type="PROSITE-ProRule" id="PRU00328"/>
    </source>
</evidence>
<evidence type="ECO:0000255" key="2">
    <source>
        <dbReference type="PROSITE-ProRule" id="PRU00541"/>
    </source>
</evidence>
<evidence type="ECO:0000255" key="3">
    <source>
        <dbReference type="PROSITE-ProRule" id="PRU00542"/>
    </source>
</evidence>
<evidence type="ECO:0000256" key="4">
    <source>
        <dbReference type="SAM" id="MobiDB-lite"/>
    </source>
</evidence>
<evidence type="ECO:0000269" key="5">
    <source>
    </source>
</evidence>
<evidence type="ECO:0000269" key="6">
    <source>
    </source>
</evidence>
<evidence type="ECO:0000269" key="7">
    <source>
    </source>
</evidence>
<evidence type="ECO:0000269" key="8">
    <source>
    </source>
</evidence>
<evidence type="ECO:0000269" key="9">
    <source>
    </source>
</evidence>
<evidence type="ECO:0000269" key="10">
    <source>
    </source>
</evidence>
<evidence type="ECO:0000269" key="11">
    <source>
    </source>
</evidence>
<evidence type="ECO:0000269" key="12">
    <source>
    </source>
</evidence>
<evidence type="ECO:0000269" key="13">
    <source>
    </source>
</evidence>
<evidence type="ECO:0000269" key="14">
    <source>
    </source>
</evidence>
<evidence type="ECO:0000303" key="15">
    <source>
    </source>
</evidence>
<evidence type="ECO:0000303" key="16">
    <source ref="3"/>
</evidence>
<evidence type="ECO:0000305" key="17"/>
<evidence type="ECO:0000312" key="18">
    <source>
        <dbReference type="EMBL" id="AAA35167.1"/>
    </source>
</evidence>
<evidence type="ECO:0000312" key="19">
    <source>
        <dbReference type="EMBL" id="AAB60289.1"/>
    </source>
</evidence>
<evidence type="ECO:0000312" key="20">
    <source>
        <dbReference type="EMBL" id="DAA10088.1"/>
    </source>
</evidence>
<evidence type="ECO:0000312" key="21">
    <source>
        <dbReference type="SGD" id="S000004802"/>
    </source>
</evidence>
<evidence type="ECO:0007829" key="22">
    <source>
        <dbReference type="PDB" id="1D8B"/>
    </source>
</evidence>
<reference evidence="19" key="1">
    <citation type="journal article" date="1994" name="Mol. Cell. Biol.">
        <title>The yeast type I topoisomerase Top3 interacts with Sgs1, a DNA helicase homolog: a potential eukaryotic reverse gyrase.</title>
        <authorList>
            <person name="Gangloff S."/>
            <person name="McDonald J.P."/>
            <person name="Bendixen C."/>
            <person name="Arthur L."/>
            <person name="Rothstein R."/>
        </authorList>
    </citation>
    <scope>NUCLEOTIDE SEQUENCE [GENOMIC DNA]</scope>
    <scope>FUNCTION</scope>
    <scope>SUBUNIT</scope>
    <source>
        <strain>ATCC 200060 / W303</strain>
    </source>
</reference>
<reference key="2">
    <citation type="journal article" date="1995" name="Cell">
        <title>Sgs1: a eukaryotic homolog of E. coli RecQ that interacts with topoisomerase II in vivo and is required for faithful chromosome segregation.</title>
        <authorList>
            <person name="Watt P.M."/>
            <person name="Louis E.J."/>
            <person name="Borts R.H."/>
            <person name="Hickson I.D."/>
        </authorList>
    </citation>
    <scope>NUCLEOTIDE SEQUENCE [GENOMIC DNA]</scope>
    <scope>FUNCTION</scope>
    <scope>SUBUNIT</scope>
</reference>
<reference evidence="18" key="3">
    <citation type="submission" date="1992-12" db="EMBL/GenBank/DDBJ databases">
        <authorList>
            <person name="Romeo A.M."/>
            <person name="Kleff S."/>
            <person name="Sternglanz R."/>
        </authorList>
    </citation>
    <scope>NUCLEOTIDE SEQUENCE [GENOMIC DNA]</scope>
</reference>
<reference evidence="20" key="4">
    <citation type="journal article" date="1997" name="Nature">
        <title>The nucleotide sequence of Saccharomyces cerevisiae chromosome XIII.</title>
        <authorList>
            <person name="Bowman S."/>
            <person name="Churcher C.M."/>
            <person name="Badcock K."/>
            <person name="Brown D."/>
            <person name="Chillingworth T."/>
            <person name="Connor R."/>
            <person name="Dedman K."/>
            <person name="Devlin K."/>
            <person name="Gentles S."/>
            <person name="Hamlin N."/>
            <person name="Hunt S."/>
            <person name="Jagels K."/>
            <person name="Lye G."/>
            <person name="Moule S."/>
            <person name="Odell C."/>
            <person name="Pearson D."/>
            <person name="Rajandream M.A."/>
            <person name="Rice P."/>
            <person name="Skelton J."/>
            <person name="Walsh S.V."/>
            <person name="Whitehead S."/>
            <person name="Barrell B.G."/>
        </authorList>
    </citation>
    <scope>NUCLEOTIDE SEQUENCE [LARGE SCALE GENOMIC DNA]</scope>
    <source>
        <strain>ATCC 204508 / S288c</strain>
    </source>
</reference>
<reference key="5">
    <citation type="journal article" date="2014" name="G3 (Bethesda)">
        <title>The reference genome sequence of Saccharomyces cerevisiae: Then and now.</title>
        <authorList>
            <person name="Engel S.R."/>
            <person name="Dietrich F.S."/>
            <person name="Fisk D.G."/>
            <person name="Binkley G."/>
            <person name="Balakrishnan R."/>
            <person name="Costanzo M.C."/>
            <person name="Dwight S.S."/>
            <person name="Hitz B.C."/>
            <person name="Karra K."/>
            <person name="Nash R.S."/>
            <person name="Weng S."/>
            <person name="Wong E.D."/>
            <person name="Lloyd P."/>
            <person name="Skrzypek M.S."/>
            <person name="Miyasato S.R."/>
            <person name="Simison M."/>
            <person name="Cherry J.M."/>
        </authorList>
    </citation>
    <scope>GENOME REANNOTATION</scope>
    <source>
        <strain>ATCC 204508 / S288c</strain>
    </source>
</reference>
<reference key="6">
    <citation type="journal article" date="1996" name="Nature">
        <title>Human homologues of yeast helicase.</title>
        <authorList>
            <person name="Lu J."/>
            <person name="Mullen J.R."/>
            <person name="Brill S.J."/>
            <person name="Kleff S."/>
            <person name="Romeo A.M."/>
            <person name="Sternglanz R."/>
        </authorList>
    </citation>
    <scope>FUNCTION AS A 3'-5' HELICASE</scope>
    <scope>CATALYTIC ACTIVITY</scope>
    <scope>MUTAGENESIS OF LYS-706</scope>
</reference>
<reference key="7">
    <citation type="journal article" date="1998" name="J. Biol. Chem.">
        <title>Purification and characterization of the Sgs1 DNA helicase activity of Saccharomyces cerevisiae.</title>
        <authorList>
            <person name="Bennett R.J."/>
            <person name="Sharp J.A."/>
            <person name="Wang J.C."/>
        </authorList>
    </citation>
    <scope>FUNCTION</scope>
    <scope>CATALYTIC ACTIVITY</scope>
    <scope>DNA-BINDING</scope>
</reference>
<reference key="8">
    <citation type="journal article" date="1999" name="Nucleic Acids Res.">
        <title>The Saccharomyces cerevisiae Sgs1 helicase efficiently unwinds G-G paired DNAs.</title>
        <authorList>
            <person name="Sun H."/>
            <person name="Bennett R.J."/>
            <person name="Maizels N."/>
        </authorList>
    </citation>
    <scope>FUNCTION</scope>
    <scope>CATALYTIC ACTIVITY</scope>
    <scope>COFACTOR</scope>
    <scope>ACTIVITY REGULATION</scope>
</reference>
<reference key="9">
    <citation type="journal article" date="2000" name="Genes Dev.">
        <title>The yeast Sgs1p helicase acts upstream of Rad53p in the DNA replication checkpoint and colocalizes with Rad53p in S-phase-specific foci.</title>
        <authorList>
            <person name="Frei C."/>
            <person name="Gasser S.M."/>
        </authorList>
    </citation>
    <scope>FUNCTION</scope>
    <scope>INDUCTION</scope>
    <scope>SUBCELLULAR LOCATION</scope>
</reference>
<reference key="10">
    <citation type="journal article" date="2002" name="Biochem. Biophys. Res. Commun.">
        <title>Supercomplex formation between Mlh1-Mlh3 and Sgs1-Top3 heterocomplexes in meiotic yeast cells.</title>
        <authorList>
            <person name="Wang T.-F."/>
            <person name="Kung W.M."/>
        </authorList>
    </citation>
    <scope>INTERACTION WITH MLH3 AND TOP3</scope>
</reference>
<reference key="11">
    <citation type="journal article" date="2002" name="Curr. Genet.">
        <title>Role of SGS1 and SLX4 in maintaining rDNA structure in Saccharomyces cerevisiae.</title>
        <authorList>
            <person name="Kaliraman V."/>
            <person name="Brill S.J."/>
        </authorList>
    </citation>
    <scope>FUNCTION</scope>
    <scope>MUTAGENESIS OF GLN-31; THR-980 AND GLU-987</scope>
</reference>
<reference key="12">
    <citation type="journal article" date="2005" name="EMBO J.">
        <title>RMI1/NCE4, a suppressor of genome instability, encodes a member of the RecQ helicase/Topo III complex.</title>
        <authorList>
            <person name="Chang M."/>
            <person name="Bellaoui M."/>
            <person name="Zhang C."/>
            <person name="Desai R."/>
            <person name="Morozov P."/>
            <person name="Delgado-Cruzata L."/>
            <person name="Rothstein R."/>
            <person name="Freyer G.A."/>
            <person name="Boone C."/>
            <person name="Brown G.W."/>
        </authorList>
    </citation>
    <scope>SUBUNIT</scope>
</reference>
<reference key="13">
    <citation type="journal article" date="2005" name="Mol. Cell. Biol.">
        <title>Yeast Rmi1/Nce4 controls genome stability as a subunit of the Sgs1-Top3 complex.</title>
        <authorList>
            <person name="Mullen J.R."/>
            <person name="Nallaseth F.S."/>
            <person name="Lan Y.Q."/>
            <person name="Slagle C.E."/>
            <person name="Brill S.J."/>
        </authorList>
    </citation>
    <scope>SUBUNIT</scope>
</reference>
<reference key="14">
    <citation type="journal article" date="2009" name="Science">
        <title>Global analysis of Cdk1 substrate phosphorylation sites provides insights into evolution.</title>
        <authorList>
            <person name="Holt L.J."/>
            <person name="Tuch B.B."/>
            <person name="Villen J."/>
            <person name="Johnson A.D."/>
            <person name="Gygi S.P."/>
            <person name="Morgan D.O."/>
        </authorList>
    </citation>
    <scope>IDENTIFICATION BY MASS SPECTROMETRY [LARGE SCALE ANALYSIS]</scope>
</reference>
<reference key="15">
    <citation type="journal article" date="1999" name="Structure">
        <title>The three-dimensional structure of the HRDC domain and implications for the Werner and Bloom syndrome proteins.</title>
        <authorList>
            <person name="Liu Z."/>
            <person name="Macias M.J."/>
            <person name="Bottomley M.J."/>
            <person name="Stier G."/>
            <person name="Linge J.P."/>
            <person name="Nilges M."/>
            <person name="Bork P."/>
            <person name="Sattler M."/>
        </authorList>
    </citation>
    <scope>STRUCTURE BY NMR OF 1271-1351 (HRDC DOMAIN)</scope>
</reference>